<proteinExistence type="evidence at transcript level"/>
<protein>
    <recommendedName>
        <fullName>Cytochrome P450 71A6</fullName>
        <ecNumber>1.14.-.-</ecNumber>
    </recommendedName>
</protein>
<dbReference type="EC" id="1.14.-.-"/>
<dbReference type="EMBL" id="Y09424">
    <property type="protein sequence ID" value="CAA70576.1"/>
    <property type="molecule type" value="mRNA"/>
</dbReference>
<dbReference type="SMR" id="O04164"/>
<dbReference type="GlyCosmos" id="O04164">
    <property type="glycosylation" value="3 sites, No reported glycans"/>
</dbReference>
<dbReference type="GO" id="GO:0016020">
    <property type="term" value="C:membrane"/>
    <property type="evidence" value="ECO:0007669"/>
    <property type="project" value="UniProtKB-SubCell"/>
</dbReference>
<dbReference type="GO" id="GO:0020037">
    <property type="term" value="F:heme binding"/>
    <property type="evidence" value="ECO:0007669"/>
    <property type="project" value="InterPro"/>
</dbReference>
<dbReference type="GO" id="GO:0005506">
    <property type="term" value="F:iron ion binding"/>
    <property type="evidence" value="ECO:0007669"/>
    <property type="project" value="InterPro"/>
</dbReference>
<dbReference type="GO" id="GO:0004497">
    <property type="term" value="F:monooxygenase activity"/>
    <property type="evidence" value="ECO:0007669"/>
    <property type="project" value="UniProtKB-KW"/>
</dbReference>
<dbReference type="GO" id="GO:0016705">
    <property type="term" value="F:oxidoreductase activity, acting on paired donors, with incorporation or reduction of molecular oxygen"/>
    <property type="evidence" value="ECO:0007669"/>
    <property type="project" value="InterPro"/>
</dbReference>
<dbReference type="CDD" id="cd11072">
    <property type="entry name" value="CYP71-like"/>
    <property type="match status" value="1"/>
</dbReference>
<dbReference type="FunFam" id="1.10.630.10:FF:000011">
    <property type="entry name" value="Cytochrome P450 83B1"/>
    <property type="match status" value="1"/>
</dbReference>
<dbReference type="Gene3D" id="1.10.630.10">
    <property type="entry name" value="Cytochrome P450"/>
    <property type="match status" value="1"/>
</dbReference>
<dbReference type="InterPro" id="IPR001128">
    <property type="entry name" value="Cyt_P450"/>
</dbReference>
<dbReference type="InterPro" id="IPR017972">
    <property type="entry name" value="Cyt_P450_CS"/>
</dbReference>
<dbReference type="InterPro" id="IPR002401">
    <property type="entry name" value="Cyt_P450_E_grp-I"/>
</dbReference>
<dbReference type="InterPro" id="IPR036396">
    <property type="entry name" value="Cyt_P450_sf"/>
</dbReference>
<dbReference type="PANTHER" id="PTHR47955:SF15">
    <property type="entry name" value="CYTOCHROME P450 71A2-LIKE"/>
    <property type="match status" value="1"/>
</dbReference>
<dbReference type="PANTHER" id="PTHR47955">
    <property type="entry name" value="CYTOCHROME P450 FAMILY 71 PROTEIN"/>
    <property type="match status" value="1"/>
</dbReference>
<dbReference type="Pfam" id="PF00067">
    <property type="entry name" value="p450"/>
    <property type="match status" value="1"/>
</dbReference>
<dbReference type="PRINTS" id="PR00463">
    <property type="entry name" value="EP450I"/>
</dbReference>
<dbReference type="PRINTS" id="PR00385">
    <property type="entry name" value="P450"/>
</dbReference>
<dbReference type="SUPFAM" id="SSF48264">
    <property type="entry name" value="Cytochrome P450"/>
    <property type="match status" value="1"/>
</dbReference>
<dbReference type="PROSITE" id="PS00086">
    <property type="entry name" value="CYTOCHROME_P450"/>
    <property type="match status" value="1"/>
</dbReference>
<keyword id="KW-0325">Glycoprotein</keyword>
<keyword id="KW-0349">Heme</keyword>
<keyword id="KW-0408">Iron</keyword>
<keyword id="KW-0472">Membrane</keyword>
<keyword id="KW-0479">Metal-binding</keyword>
<keyword id="KW-0503">Monooxygenase</keyword>
<keyword id="KW-0560">Oxidoreductase</keyword>
<keyword id="KW-0812">Transmembrane</keyword>
<keyword id="KW-1133">Transmembrane helix</keyword>
<gene>
    <name type="primary">CYP71A6</name>
</gene>
<reference key="1">
    <citation type="journal article" date="1997" name="Plant Mol. Biol.">
        <title>Spatially distinct expression of two new cytochrome P450s in leaves of Nepeta racemosa: identification of a trichome-specific isoform.</title>
        <authorList>
            <person name="Clark I.M."/>
            <person name="Forde B.G."/>
            <person name="Hallahan D.L."/>
        </authorList>
    </citation>
    <scope>NUCLEOTIDE SEQUENCE [MRNA]</scope>
    <source>
        <tissue>Leaf</tissue>
    </source>
</reference>
<comment type="cofactor">
    <cofactor evidence="1">
        <name>heme</name>
        <dbReference type="ChEBI" id="CHEBI:30413"/>
    </cofactor>
</comment>
<comment type="subcellular location">
    <subcellularLocation>
        <location evidence="2">Membrane</location>
        <topology evidence="2">Single-pass membrane protein</topology>
    </subcellularLocation>
</comment>
<comment type="similarity">
    <text evidence="4">Belongs to the cytochrome P450 family.</text>
</comment>
<evidence type="ECO:0000250" key="1">
    <source>
        <dbReference type="UniProtKB" id="P04798"/>
    </source>
</evidence>
<evidence type="ECO:0000255" key="2"/>
<evidence type="ECO:0000255" key="3">
    <source>
        <dbReference type="PROSITE-ProRule" id="PRU00498"/>
    </source>
</evidence>
<evidence type="ECO:0000305" key="4"/>
<name>C71A6_NEPRA</name>
<accession>O04164</accession>
<sequence length="511" mass="57955">ILIALLCTLPFLFFLKKWRRSYSGKTPPPSPPKLPVLGNLHQLGTFPHRSLQSLSRRYGPVMQLHFGSVPVLVASSPEAAREIMKNQDLNFSNRPNLSIPRRLLYDNHDVAFAPYGEYWRQIRSICVLQLLSNKRVQSFRRVREEETSIMVEKIMQLQKTTPTAAVNLTDLLTCLTNDVFCRIALGKKYGGTTTGDGEYHVRSLKKNLAEFYVLLGISPLWEYIPWLEWTRRFDGVDRRIEEVSRTFDEFLGKVIQEHRVRDKREDTTVVGDTVGLDFVDLLLQFQRENERSSSPVDDLTIKAVILDMFLAGTDTTVTALEWALSELIKNPRAMKILQKEVRGVAGSKGEIEESDLEKMPYLKAVMKESLRLHAPVPLLVPRESTRDTKVLGYDVASGTRVLINCWAIGRDSSVWEESETFLPERFLETSIDYRGMHFELIPFGSGRRGCPGATFAAAIDELALATLVHKFDFKLPNGVRVEDLDMSEGSGFTIHKKFPLLVVPTPHACTS</sequence>
<organism>
    <name type="scientific">Nepeta racemosa</name>
    <name type="common">Catmint</name>
    <name type="synonym">Raceme catnip</name>
    <dbReference type="NCBI Taxonomy" id="54731"/>
    <lineage>
        <taxon>Eukaryota</taxon>
        <taxon>Viridiplantae</taxon>
        <taxon>Streptophyta</taxon>
        <taxon>Embryophyta</taxon>
        <taxon>Tracheophyta</taxon>
        <taxon>Spermatophyta</taxon>
        <taxon>Magnoliopsida</taxon>
        <taxon>eudicotyledons</taxon>
        <taxon>Gunneridae</taxon>
        <taxon>Pentapetalae</taxon>
        <taxon>asterids</taxon>
        <taxon>lamiids</taxon>
        <taxon>Lamiales</taxon>
        <taxon>Lamiaceae</taxon>
        <taxon>Nepetoideae</taxon>
        <taxon>Mentheae</taxon>
        <taxon>Nepetinae</taxon>
        <taxon>Nepeta</taxon>
    </lineage>
</organism>
<feature type="chain" id="PRO_0000052060" description="Cytochrome P450 71A6">
    <location>
        <begin position="1" status="less than"/>
        <end position="511"/>
    </location>
</feature>
<feature type="transmembrane region" description="Helical" evidence="2">
    <location>
        <begin position="1" status="less than"/>
        <end position="15"/>
    </location>
</feature>
<feature type="transmembrane region" description="Helical" evidence="2">
    <location>
        <begin position="61"/>
        <end position="77"/>
    </location>
</feature>
<feature type="binding site" description="axial binding residue" evidence="1">
    <location>
        <position position="450"/>
    </location>
    <ligand>
        <name>heme</name>
        <dbReference type="ChEBI" id="CHEBI:30413"/>
    </ligand>
    <ligandPart>
        <name>Fe</name>
        <dbReference type="ChEBI" id="CHEBI:18248"/>
    </ligandPart>
</feature>
<feature type="glycosylation site" description="N-linked (GlcNAc...) asparagine" evidence="3">
    <location>
        <position position="90"/>
    </location>
</feature>
<feature type="glycosylation site" description="N-linked (GlcNAc...) asparagine" evidence="3">
    <location>
        <position position="96"/>
    </location>
</feature>
<feature type="glycosylation site" description="N-linked (GlcNAc...) asparagine" evidence="3">
    <location>
        <position position="167"/>
    </location>
</feature>
<feature type="non-terminal residue">
    <location>
        <position position="1"/>
    </location>
</feature>